<sequence>MIEQQKRKGPELPLVPVKRQRHELLLGAGSGPGAGQQQATPGALLQAGPPRCSSLQAPIMLLSGHEGEVYCCKFHPNGSTLASAGFDRLILLWNVYGDCDNYATLKGHSGAVMELHYNTDGSMLFSASTDKTVAVWDSETGERVKRLKGHTSFVNSCYPARRGPQLVCTGSDDGTVKLWDIRKKAAIQTFQNTYQVLAVTFNDTSDQIISGGIDNDIKVWDLRQNKLTYTMRGHADSVTGLSLSSEGSYLLSNAMDNTVRVWDVRPFAPKERCVKIFQGNVHNFEKNLLRCSWSPDGSKIAAGSADRFVYVWDTTSRRILYKLPGHAGSINEVAFHPDEPIIISASSDKRLYMGEIQ</sequence>
<protein>
    <recommendedName>
        <fullName>U5 small nuclear ribonucleoprotein 40 kDa protein</fullName>
        <shortName>U5 snRNP 40 kDa protein</shortName>
        <shortName>U5-40K</shortName>
    </recommendedName>
    <alternativeName>
        <fullName>38 kDa-splicing factor</fullName>
    </alternativeName>
    <alternativeName>
        <fullName>Prp8-binding protein</fullName>
        <shortName>hPRP8BP</shortName>
    </alternativeName>
    <alternativeName>
        <fullName>U5 snRNP-specific 40 kDa protein</fullName>
    </alternativeName>
    <alternativeName>
        <fullName>WD repeat-containing protein 57</fullName>
    </alternativeName>
</protein>
<dbReference type="EMBL" id="AF090988">
    <property type="protein sequence ID" value="AAC69625.1"/>
    <property type="molecule type" value="mRNA"/>
</dbReference>
<dbReference type="EMBL" id="AK298823">
    <property type="protein sequence ID" value="BAG60953.1"/>
    <property type="molecule type" value="mRNA"/>
</dbReference>
<dbReference type="EMBL" id="AC114495">
    <property type="status" value="NOT_ANNOTATED_CDS"/>
    <property type="molecule type" value="Genomic_DNA"/>
</dbReference>
<dbReference type="EMBL" id="AL451070">
    <property type="status" value="NOT_ANNOTATED_CDS"/>
    <property type="molecule type" value="Genomic_DNA"/>
</dbReference>
<dbReference type="EMBL" id="BC001494">
    <property type="protein sequence ID" value="AAH01494.1"/>
    <property type="molecule type" value="mRNA"/>
</dbReference>
<dbReference type="EMBL" id="AF083383">
    <property type="protein sequence ID" value="AAC64084.1"/>
    <property type="status" value="ALT_SEQ"/>
    <property type="molecule type" value="mRNA"/>
</dbReference>
<dbReference type="CCDS" id="CCDS340.1">
    <molecule id="Q96DI7-1"/>
</dbReference>
<dbReference type="RefSeq" id="NP_004805.2">
    <molecule id="Q96DI7-1"/>
    <property type="nucleotide sequence ID" value="NM_004814.3"/>
</dbReference>
<dbReference type="PDB" id="3JCR">
    <property type="method" value="EM"/>
    <property type="resolution" value="7.00 A"/>
    <property type="chains" value="D=1-357"/>
</dbReference>
<dbReference type="PDB" id="5MQF">
    <property type="method" value="EM"/>
    <property type="resolution" value="5.90 A"/>
    <property type="chains" value="F=1-357"/>
</dbReference>
<dbReference type="PDB" id="5O9Z">
    <property type="method" value="EM"/>
    <property type="resolution" value="4.50 A"/>
    <property type="chains" value="D=1-357"/>
</dbReference>
<dbReference type="PDB" id="5XJC">
    <property type="method" value="EM"/>
    <property type="resolution" value="3.60 A"/>
    <property type="chains" value="E=1-357"/>
</dbReference>
<dbReference type="PDB" id="5YZG">
    <property type="method" value="EM"/>
    <property type="resolution" value="4.10 A"/>
    <property type="chains" value="E=1-357"/>
</dbReference>
<dbReference type="PDB" id="5Z56">
    <property type="method" value="EM"/>
    <property type="resolution" value="5.10 A"/>
    <property type="chains" value="E=1-357"/>
</dbReference>
<dbReference type="PDB" id="5Z57">
    <property type="method" value="EM"/>
    <property type="resolution" value="6.50 A"/>
    <property type="chains" value="E=1-357"/>
</dbReference>
<dbReference type="PDB" id="5Z58">
    <property type="method" value="EM"/>
    <property type="resolution" value="4.90 A"/>
    <property type="chains" value="E=1-357"/>
</dbReference>
<dbReference type="PDB" id="6AH0">
    <property type="method" value="EM"/>
    <property type="resolution" value="5.70 A"/>
    <property type="chains" value="E=1-357"/>
</dbReference>
<dbReference type="PDB" id="6AHD">
    <property type="method" value="EM"/>
    <property type="resolution" value="3.80 A"/>
    <property type="chains" value="E=1-357"/>
</dbReference>
<dbReference type="PDB" id="6FF7">
    <property type="method" value="EM"/>
    <property type="resolution" value="4.50 A"/>
    <property type="chains" value="F=1-357"/>
</dbReference>
<dbReference type="PDB" id="6ICZ">
    <property type="method" value="EM"/>
    <property type="resolution" value="3.00 A"/>
    <property type="chains" value="E=1-357"/>
</dbReference>
<dbReference type="PDB" id="6ID0">
    <property type="method" value="EM"/>
    <property type="resolution" value="2.90 A"/>
    <property type="chains" value="E=1-357"/>
</dbReference>
<dbReference type="PDB" id="6ID1">
    <property type="method" value="EM"/>
    <property type="resolution" value="2.86 A"/>
    <property type="chains" value="E=1-357"/>
</dbReference>
<dbReference type="PDB" id="6QDV">
    <property type="method" value="EM"/>
    <property type="resolution" value="3.30 A"/>
    <property type="chains" value="N=51-357"/>
</dbReference>
<dbReference type="PDB" id="6QW6">
    <property type="method" value="EM"/>
    <property type="resolution" value="2.92 A"/>
    <property type="chains" value="5O=1-357"/>
</dbReference>
<dbReference type="PDB" id="6QX9">
    <property type="method" value="EM"/>
    <property type="resolution" value="3.28 A"/>
    <property type="chains" value="5O=1-357"/>
</dbReference>
<dbReference type="PDB" id="6ZYM">
    <property type="method" value="EM"/>
    <property type="resolution" value="3.40 A"/>
    <property type="chains" value="F=1-357"/>
</dbReference>
<dbReference type="PDB" id="7ABG">
    <property type="method" value="EM"/>
    <property type="resolution" value="7.80 A"/>
    <property type="chains" value="D=1-357"/>
</dbReference>
<dbReference type="PDB" id="7ABI">
    <property type="method" value="EM"/>
    <property type="resolution" value="8.00 A"/>
    <property type="chains" value="D=1-357"/>
</dbReference>
<dbReference type="PDB" id="7DVQ">
    <property type="method" value="EM"/>
    <property type="resolution" value="2.89 A"/>
    <property type="chains" value="E=1-357"/>
</dbReference>
<dbReference type="PDB" id="7W59">
    <property type="method" value="EM"/>
    <property type="resolution" value="3.60 A"/>
    <property type="chains" value="E=1-357"/>
</dbReference>
<dbReference type="PDB" id="7W5A">
    <property type="method" value="EM"/>
    <property type="resolution" value="3.60 A"/>
    <property type="chains" value="E=1-357"/>
</dbReference>
<dbReference type="PDB" id="7W5B">
    <property type="method" value="EM"/>
    <property type="resolution" value="4.30 A"/>
    <property type="chains" value="E=1-357"/>
</dbReference>
<dbReference type="PDB" id="8C6J">
    <property type="method" value="EM"/>
    <property type="resolution" value="2.80 A"/>
    <property type="chains" value="N=1-357"/>
</dbReference>
<dbReference type="PDB" id="8CH6">
    <property type="method" value="EM"/>
    <property type="resolution" value="5.90 A"/>
    <property type="chains" value="o=1-357"/>
</dbReference>
<dbReference type="PDB" id="8H6E">
    <property type="method" value="EM"/>
    <property type="resolution" value="3.20 A"/>
    <property type="chains" value="5E=1-357"/>
</dbReference>
<dbReference type="PDB" id="8H6J">
    <property type="method" value="EM"/>
    <property type="resolution" value="3.25 A"/>
    <property type="chains" value="5E=1-357"/>
</dbReference>
<dbReference type="PDB" id="8H6K">
    <property type="method" value="EM"/>
    <property type="resolution" value="2.70 A"/>
    <property type="chains" value="5E=1-357"/>
</dbReference>
<dbReference type="PDB" id="8H6L">
    <property type="method" value="EM"/>
    <property type="resolution" value="2.60 A"/>
    <property type="chains" value="5E=1-357"/>
</dbReference>
<dbReference type="PDB" id="8I0P">
    <property type="method" value="EM"/>
    <property type="resolution" value="3.40 A"/>
    <property type="chains" value="E=1-357"/>
</dbReference>
<dbReference type="PDB" id="8I0R">
    <property type="method" value="EM"/>
    <property type="resolution" value="3.00 A"/>
    <property type="chains" value="E=1-357"/>
</dbReference>
<dbReference type="PDB" id="8I0S">
    <property type="method" value="EM"/>
    <property type="resolution" value="4.20 A"/>
    <property type="chains" value="E=1-357"/>
</dbReference>
<dbReference type="PDB" id="8I0T">
    <property type="method" value="EM"/>
    <property type="resolution" value="3.00 A"/>
    <property type="chains" value="E=1-357"/>
</dbReference>
<dbReference type="PDB" id="8I0U">
    <property type="method" value="EM"/>
    <property type="resolution" value="3.30 A"/>
    <property type="chains" value="E=1-357"/>
</dbReference>
<dbReference type="PDB" id="8I0V">
    <property type="method" value="EM"/>
    <property type="resolution" value="3.00 A"/>
    <property type="chains" value="E=1-357"/>
</dbReference>
<dbReference type="PDB" id="8I0W">
    <property type="method" value="EM"/>
    <property type="resolution" value="3.40 A"/>
    <property type="chains" value="E=1-357"/>
</dbReference>
<dbReference type="PDB" id="8Q7Q">
    <property type="method" value="EM"/>
    <property type="resolution" value="3.20 A"/>
    <property type="chains" value="D=1-357"/>
</dbReference>
<dbReference type="PDB" id="8Q7V">
    <property type="method" value="EM"/>
    <property type="resolution" value="3.80 A"/>
    <property type="chains" value="D=1-357"/>
</dbReference>
<dbReference type="PDB" id="8Q7W">
    <property type="method" value="EM"/>
    <property type="resolution" value="3.90 A"/>
    <property type="chains" value="D=1-357"/>
</dbReference>
<dbReference type="PDB" id="8Q7X">
    <property type="method" value="EM"/>
    <property type="resolution" value="4.60 A"/>
    <property type="chains" value="D=1-357"/>
</dbReference>
<dbReference type="PDB" id="8QO9">
    <property type="method" value="EM"/>
    <property type="resolution" value="5.29 A"/>
    <property type="chains" value="E=1-357"/>
</dbReference>
<dbReference type="PDB" id="8QXD">
    <property type="method" value="EM"/>
    <property type="resolution" value="9.60 A"/>
    <property type="chains" value="E=1-357"/>
</dbReference>
<dbReference type="PDB" id="8QZS">
    <property type="method" value="EM"/>
    <property type="resolution" value="4.10 A"/>
    <property type="chains" value="E=1-357"/>
</dbReference>
<dbReference type="PDB" id="8R08">
    <property type="method" value="EM"/>
    <property type="resolution" value="6.10 A"/>
    <property type="chains" value="E=1-357"/>
</dbReference>
<dbReference type="PDB" id="8R09">
    <property type="method" value="EM"/>
    <property type="resolution" value="4.30 A"/>
    <property type="chains" value="E=1-357"/>
</dbReference>
<dbReference type="PDB" id="8R0A">
    <property type="method" value="EM"/>
    <property type="resolution" value="5.80 A"/>
    <property type="chains" value="E=1-357"/>
</dbReference>
<dbReference type="PDB" id="8R0B">
    <property type="method" value="EM"/>
    <property type="resolution" value="4.40 A"/>
    <property type="chains" value="E=1-357"/>
</dbReference>
<dbReference type="PDB" id="8RC0">
    <property type="method" value="EM"/>
    <property type="resolution" value="3.20 A"/>
    <property type="chains" value="G=1-357"/>
</dbReference>
<dbReference type="PDB" id="8RM5">
    <property type="method" value="EM"/>
    <property type="resolution" value="6.90 A"/>
    <property type="chains" value="E=1-357"/>
</dbReference>
<dbReference type="PDB" id="8RO2">
    <property type="method" value="EM"/>
    <property type="resolution" value="3.50 A"/>
    <property type="chains" value="E=1-357"/>
</dbReference>
<dbReference type="PDB" id="8Y6O">
    <property type="method" value="EM"/>
    <property type="resolution" value="3.38 A"/>
    <property type="chains" value="F=1-357"/>
</dbReference>
<dbReference type="PDB" id="9FMD">
    <property type="method" value="EM"/>
    <property type="resolution" value="3.30 A"/>
    <property type="chains" value="E=1-357"/>
</dbReference>
<dbReference type="PDBsum" id="3JCR"/>
<dbReference type="PDBsum" id="5MQF"/>
<dbReference type="PDBsum" id="5O9Z"/>
<dbReference type="PDBsum" id="5XJC"/>
<dbReference type="PDBsum" id="5YZG"/>
<dbReference type="PDBsum" id="5Z56"/>
<dbReference type="PDBsum" id="5Z57"/>
<dbReference type="PDBsum" id="5Z58"/>
<dbReference type="PDBsum" id="6AH0"/>
<dbReference type="PDBsum" id="6AHD"/>
<dbReference type="PDBsum" id="6FF7"/>
<dbReference type="PDBsum" id="6ICZ"/>
<dbReference type="PDBsum" id="6ID0"/>
<dbReference type="PDBsum" id="6ID1"/>
<dbReference type="PDBsum" id="6QDV"/>
<dbReference type="PDBsum" id="6QW6"/>
<dbReference type="PDBsum" id="6QX9"/>
<dbReference type="PDBsum" id="6ZYM"/>
<dbReference type="PDBsum" id="7ABG"/>
<dbReference type="PDBsum" id="7ABI"/>
<dbReference type="PDBsum" id="7DVQ"/>
<dbReference type="PDBsum" id="7W59"/>
<dbReference type="PDBsum" id="7W5A"/>
<dbReference type="PDBsum" id="7W5B"/>
<dbReference type="PDBsum" id="8C6J"/>
<dbReference type="PDBsum" id="8CH6"/>
<dbReference type="PDBsum" id="8H6E"/>
<dbReference type="PDBsum" id="8H6J"/>
<dbReference type="PDBsum" id="8H6K"/>
<dbReference type="PDBsum" id="8H6L"/>
<dbReference type="PDBsum" id="8I0P"/>
<dbReference type="PDBsum" id="8I0R"/>
<dbReference type="PDBsum" id="8I0S"/>
<dbReference type="PDBsum" id="8I0T"/>
<dbReference type="PDBsum" id="8I0U"/>
<dbReference type="PDBsum" id="8I0V"/>
<dbReference type="PDBsum" id="8I0W"/>
<dbReference type="PDBsum" id="8Q7Q"/>
<dbReference type="PDBsum" id="8Q7V"/>
<dbReference type="PDBsum" id="8Q7W"/>
<dbReference type="PDBsum" id="8Q7X"/>
<dbReference type="PDBsum" id="8QO9"/>
<dbReference type="PDBsum" id="8QXD"/>
<dbReference type="PDBsum" id="8QZS"/>
<dbReference type="PDBsum" id="8R08"/>
<dbReference type="PDBsum" id="8R09"/>
<dbReference type="PDBsum" id="8R0A"/>
<dbReference type="PDBsum" id="8R0B"/>
<dbReference type="PDBsum" id="8RC0"/>
<dbReference type="PDBsum" id="8RM5"/>
<dbReference type="PDBsum" id="8RO2"/>
<dbReference type="PDBsum" id="8Y6O"/>
<dbReference type="PDBsum" id="9FMD"/>
<dbReference type="EMDB" id="EMD-11569"/>
<dbReference type="EMDB" id="EMD-11695"/>
<dbReference type="EMDB" id="EMD-11697"/>
<dbReference type="EMDB" id="EMD-16452"/>
<dbReference type="EMDB" id="EMD-16658"/>
<dbReference type="EMDB" id="EMD-18229"/>
<dbReference type="EMDB" id="EMD-18234"/>
<dbReference type="EMDB" id="EMD-18235"/>
<dbReference type="EMDB" id="EMD-18237"/>
<dbReference type="EMDB" id="EMD-18529"/>
<dbReference type="EMDB" id="EMD-18718"/>
<dbReference type="EMDB" id="EMD-18781"/>
<dbReference type="EMDB" id="EMD-18786"/>
<dbReference type="EMDB" id="EMD-18787"/>
<dbReference type="EMDB" id="EMD-18788"/>
<dbReference type="EMDB" id="EMD-18789"/>
<dbReference type="EMDB" id="EMD-19041"/>
<dbReference type="EMDB" id="EMD-19349"/>
<dbReference type="EMDB" id="EMD-19399"/>
<dbReference type="EMDB" id="EMD-30875"/>
<dbReference type="EMDB" id="EMD-32317"/>
<dbReference type="EMDB" id="EMD-32319"/>
<dbReference type="EMDB" id="EMD-32321"/>
<dbReference type="EMDB" id="EMD-34500"/>
<dbReference type="EMDB" id="EMD-34505"/>
<dbReference type="EMDB" id="EMD-34507"/>
<dbReference type="EMDB" id="EMD-34508"/>
<dbReference type="EMDB" id="EMD-35105"/>
<dbReference type="EMDB" id="EMD-35107"/>
<dbReference type="EMDB" id="EMD-35108"/>
<dbReference type="EMDB" id="EMD-35109"/>
<dbReference type="EMDB" id="EMD-35110"/>
<dbReference type="EMDB" id="EMD-35111"/>
<dbReference type="EMDB" id="EMD-35113"/>
<dbReference type="EMDB" id="EMD-3545"/>
<dbReference type="EMDB" id="EMD-3766"/>
<dbReference type="EMDB" id="EMD-38993"/>
<dbReference type="EMDB" id="EMD-4525"/>
<dbReference type="EMDB" id="EMD-4658"/>
<dbReference type="EMDB" id="EMD-4665"/>
<dbReference type="EMDB" id="EMD-6721"/>
<dbReference type="EMDB" id="EMD-6864"/>
<dbReference type="EMDB" id="EMD-6889"/>
<dbReference type="EMDB" id="EMD-6890"/>
<dbReference type="EMDB" id="EMD-6891"/>
<dbReference type="EMDB" id="EMD-9621"/>
<dbReference type="EMDB" id="EMD-9624"/>
<dbReference type="EMDB" id="EMD-9645"/>
<dbReference type="EMDB" id="EMD-9646"/>
<dbReference type="EMDB" id="EMD-9647"/>
<dbReference type="SMR" id="Q96DI7"/>
<dbReference type="BioGRID" id="114805">
    <property type="interactions" value="649"/>
</dbReference>
<dbReference type="ComplexPortal" id="CPX-2391">
    <property type="entry name" value="U4/U6.U5 small nuclear ribonucleoprotein complex"/>
</dbReference>
<dbReference type="CORUM" id="Q96DI7"/>
<dbReference type="FunCoup" id="Q96DI7">
    <property type="interactions" value="3953"/>
</dbReference>
<dbReference type="IntAct" id="Q96DI7">
    <property type="interactions" value="121"/>
</dbReference>
<dbReference type="MINT" id="Q96DI7"/>
<dbReference type="STRING" id="9606.ENSP00000263694"/>
<dbReference type="GlyGen" id="Q96DI7">
    <property type="glycosylation" value="2 sites, 1 O-linked glycan (1 site)"/>
</dbReference>
<dbReference type="iPTMnet" id="Q96DI7"/>
<dbReference type="PhosphoSitePlus" id="Q96DI7"/>
<dbReference type="SwissPalm" id="Q96DI7"/>
<dbReference type="BioMuta" id="SNRNP40"/>
<dbReference type="DMDM" id="67462075"/>
<dbReference type="jPOST" id="Q96DI7"/>
<dbReference type="MassIVE" id="Q96DI7"/>
<dbReference type="PaxDb" id="9606-ENSP00000263694"/>
<dbReference type="PeptideAtlas" id="Q96DI7"/>
<dbReference type="ProteomicsDB" id="4882"/>
<dbReference type="ProteomicsDB" id="76291">
    <molecule id="Q96DI7-1"/>
</dbReference>
<dbReference type="Pumba" id="Q96DI7"/>
<dbReference type="TopDownProteomics" id="Q96DI7-1">
    <molecule id="Q96DI7-1"/>
</dbReference>
<dbReference type="Antibodypedia" id="16742">
    <property type="antibodies" value="128 antibodies from 19 providers"/>
</dbReference>
<dbReference type="DNASU" id="9410"/>
<dbReference type="Ensembl" id="ENST00000263694.9">
    <molecule id="Q96DI7-1"/>
    <property type="protein sequence ID" value="ENSP00000263694.4"/>
    <property type="gene ID" value="ENSG00000060688.13"/>
</dbReference>
<dbReference type="GeneID" id="9410"/>
<dbReference type="KEGG" id="hsa:9410"/>
<dbReference type="MANE-Select" id="ENST00000263694.9">
    <property type="protein sequence ID" value="ENSP00000263694.4"/>
    <property type="RefSeq nucleotide sequence ID" value="NM_004814.3"/>
    <property type="RefSeq protein sequence ID" value="NP_004805.2"/>
</dbReference>
<dbReference type="UCSC" id="uc001bso.4">
    <molecule id="Q96DI7-1"/>
    <property type="organism name" value="human"/>
</dbReference>
<dbReference type="AGR" id="HGNC:30857"/>
<dbReference type="CTD" id="9410"/>
<dbReference type="DisGeNET" id="9410"/>
<dbReference type="GeneCards" id="SNRNP40"/>
<dbReference type="HGNC" id="HGNC:30857">
    <property type="gene designation" value="SNRNP40"/>
</dbReference>
<dbReference type="HPA" id="ENSG00000060688">
    <property type="expression patterns" value="Low tissue specificity"/>
</dbReference>
<dbReference type="MIM" id="607797">
    <property type="type" value="gene"/>
</dbReference>
<dbReference type="neXtProt" id="NX_Q96DI7"/>
<dbReference type="OpenTargets" id="ENSG00000060688"/>
<dbReference type="PharmGKB" id="PA164726132"/>
<dbReference type="VEuPathDB" id="HostDB:ENSG00000060688"/>
<dbReference type="eggNOG" id="KOG0265">
    <property type="taxonomic scope" value="Eukaryota"/>
</dbReference>
<dbReference type="GeneTree" id="ENSGT00940000155058"/>
<dbReference type="HOGENOM" id="CLU_000288_57_2_1"/>
<dbReference type="InParanoid" id="Q96DI7"/>
<dbReference type="OMA" id="IWDIRPY"/>
<dbReference type="OrthoDB" id="1068471at2759"/>
<dbReference type="PAN-GO" id="Q96DI7">
    <property type="GO annotations" value="1 GO annotation based on evolutionary models"/>
</dbReference>
<dbReference type="PhylomeDB" id="Q96DI7"/>
<dbReference type="TreeFam" id="TF300039"/>
<dbReference type="PathwayCommons" id="Q96DI7"/>
<dbReference type="Reactome" id="R-HSA-72163">
    <property type="pathway name" value="mRNA Splicing - Major Pathway"/>
</dbReference>
<dbReference type="Reactome" id="R-HSA-72165">
    <property type="pathway name" value="mRNA Splicing - Minor Pathway"/>
</dbReference>
<dbReference type="SignaLink" id="Q96DI7"/>
<dbReference type="SIGNOR" id="Q96DI7"/>
<dbReference type="BioGRID-ORCS" id="9410">
    <property type="hits" value="657 hits in 1174 CRISPR screens"/>
</dbReference>
<dbReference type="ChiTaRS" id="SNRNP40">
    <property type="organism name" value="human"/>
</dbReference>
<dbReference type="GeneWiki" id="WDR57"/>
<dbReference type="GenomeRNAi" id="9410"/>
<dbReference type="Pharos" id="Q96DI7">
    <property type="development level" value="Tbio"/>
</dbReference>
<dbReference type="PRO" id="PR:Q96DI7"/>
<dbReference type="Proteomes" id="UP000005640">
    <property type="component" value="Chromosome 1"/>
</dbReference>
<dbReference type="RNAct" id="Q96DI7">
    <property type="molecule type" value="protein"/>
</dbReference>
<dbReference type="Bgee" id="ENSG00000060688">
    <property type="expression patterns" value="Expressed in ganglionic eminence and 177 other cell types or tissues"/>
</dbReference>
<dbReference type="ExpressionAtlas" id="Q96DI7">
    <property type="expression patterns" value="baseline and differential"/>
</dbReference>
<dbReference type="GO" id="GO:0071013">
    <property type="term" value="C:catalytic step 2 spliceosome"/>
    <property type="evidence" value="ECO:0000314"/>
    <property type="project" value="UniProtKB"/>
</dbReference>
<dbReference type="GO" id="GO:0005829">
    <property type="term" value="C:cytosol"/>
    <property type="evidence" value="ECO:0000314"/>
    <property type="project" value="HPA"/>
</dbReference>
<dbReference type="GO" id="GO:0016607">
    <property type="term" value="C:nuclear speck"/>
    <property type="evidence" value="ECO:0000314"/>
    <property type="project" value="HPA"/>
</dbReference>
<dbReference type="GO" id="GO:0005654">
    <property type="term" value="C:nucleoplasm"/>
    <property type="evidence" value="ECO:0000304"/>
    <property type="project" value="Reactome"/>
</dbReference>
<dbReference type="GO" id="GO:0005634">
    <property type="term" value="C:nucleus"/>
    <property type="evidence" value="ECO:0000303"/>
    <property type="project" value="ComplexPortal"/>
</dbReference>
<dbReference type="GO" id="GO:0005732">
    <property type="term" value="C:sno(s)RNA-containing ribonucleoprotein complex"/>
    <property type="evidence" value="ECO:0000303"/>
    <property type="project" value="UniProtKB"/>
</dbReference>
<dbReference type="GO" id="GO:0071007">
    <property type="term" value="C:U2-type catalytic step 2 spliceosome"/>
    <property type="evidence" value="ECO:0000314"/>
    <property type="project" value="UniProtKB"/>
</dbReference>
<dbReference type="GO" id="GO:0046540">
    <property type="term" value="C:U4/U6 x U5 tri-snRNP complex"/>
    <property type="evidence" value="ECO:0000353"/>
    <property type="project" value="ComplexPortal"/>
</dbReference>
<dbReference type="GO" id="GO:0005682">
    <property type="term" value="C:U5 snRNP"/>
    <property type="evidence" value="ECO:0000304"/>
    <property type="project" value="ProtInc"/>
</dbReference>
<dbReference type="GO" id="GO:0003723">
    <property type="term" value="F:RNA binding"/>
    <property type="evidence" value="ECO:0007005"/>
    <property type="project" value="UniProtKB"/>
</dbReference>
<dbReference type="GO" id="GO:0000398">
    <property type="term" value="P:mRNA splicing, via spliceosome"/>
    <property type="evidence" value="ECO:0000303"/>
    <property type="project" value="ComplexPortal"/>
</dbReference>
<dbReference type="GO" id="GO:0006396">
    <property type="term" value="P:RNA processing"/>
    <property type="evidence" value="ECO:0000304"/>
    <property type="project" value="ProtInc"/>
</dbReference>
<dbReference type="GO" id="GO:0008380">
    <property type="term" value="P:RNA splicing"/>
    <property type="evidence" value="ECO:0000304"/>
    <property type="project" value="ProtInc"/>
</dbReference>
<dbReference type="GO" id="GO:0000375">
    <property type="term" value="P:RNA splicing, via transesterification reactions"/>
    <property type="evidence" value="ECO:0000304"/>
    <property type="project" value="UniProtKB"/>
</dbReference>
<dbReference type="CDD" id="cd00200">
    <property type="entry name" value="WD40"/>
    <property type="match status" value="1"/>
</dbReference>
<dbReference type="FunFam" id="2.130.10.10:FF:000229">
    <property type="entry name" value="Small nuclear ribonucleoprotein U5 subunit 40"/>
    <property type="match status" value="1"/>
</dbReference>
<dbReference type="Gene3D" id="2.130.10.10">
    <property type="entry name" value="YVTN repeat-like/Quinoprotein amine dehydrogenase"/>
    <property type="match status" value="1"/>
</dbReference>
<dbReference type="InterPro" id="IPR020472">
    <property type="entry name" value="G-protein_beta_WD-40_rep"/>
</dbReference>
<dbReference type="InterPro" id="IPR052234">
    <property type="entry name" value="U5_snRNP_Component"/>
</dbReference>
<dbReference type="InterPro" id="IPR015943">
    <property type="entry name" value="WD40/YVTN_repeat-like_dom_sf"/>
</dbReference>
<dbReference type="InterPro" id="IPR019775">
    <property type="entry name" value="WD40_repeat_CS"/>
</dbReference>
<dbReference type="InterPro" id="IPR036322">
    <property type="entry name" value="WD40_repeat_dom_sf"/>
</dbReference>
<dbReference type="InterPro" id="IPR001680">
    <property type="entry name" value="WD40_rpt"/>
</dbReference>
<dbReference type="PANTHER" id="PTHR44006">
    <property type="entry name" value="U5 SMALL NUCLEAR RIBONUCLEOPROTEIN 40 KDA PROTEIN"/>
    <property type="match status" value="1"/>
</dbReference>
<dbReference type="PANTHER" id="PTHR44006:SF1">
    <property type="entry name" value="U5 SMALL NUCLEAR RIBONUCLEOPROTEIN 40 KDA PROTEIN"/>
    <property type="match status" value="1"/>
</dbReference>
<dbReference type="Pfam" id="PF00400">
    <property type="entry name" value="WD40"/>
    <property type="match status" value="7"/>
</dbReference>
<dbReference type="PRINTS" id="PR00320">
    <property type="entry name" value="GPROTEINBRPT"/>
</dbReference>
<dbReference type="SMART" id="SM00320">
    <property type="entry name" value="WD40"/>
    <property type="match status" value="7"/>
</dbReference>
<dbReference type="SUPFAM" id="SSF50978">
    <property type="entry name" value="WD40 repeat-like"/>
    <property type="match status" value="1"/>
</dbReference>
<dbReference type="PROSITE" id="PS00678">
    <property type="entry name" value="WD_REPEATS_1"/>
    <property type="match status" value="5"/>
</dbReference>
<dbReference type="PROSITE" id="PS50082">
    <property type="entry name" value="WD_REPEATS_2"/>
    <property type="match status" value="7"/>
</dbReference>
<dbReference type="PROSITE" id="PS50294">
    <property type="entry name" value="WD_REPEATS_REGION"/>
    <property type="match status" value="1"/>
</dbReference>
<gene>
    <name type="primary">SNRNP40</name>
    <name type="synonym">PRP8BP</name>
    <name type="synonym">SFP38</name>
    <name type="synonym">WDR57</name>
</gene>
<name>SNR40_HUMAN</name>
<feature type="chain" id="PRO_0000051417" description="U5 small nuclear ribonucleoprotein 40 kDa protein">
    <location>
        <begin position="1"/>
        <end position="357"/>
    </location>
</feature>
<feature type="repeat" description="WD 1">
    <location>
        <begin position="64"/>
        <end position="103"/>
    </location>
</feature>
<feature type="repeat" description="WD 2">
    <location>
        <begin position="107"/>
        <end position="146"/>
    </location>
</feature>
<feature type="repeat" description="WD 3">
    <location>
        <begin position="149"/>
        <end position="189"/>
    </location>
</feature>
<feature type="repeat" description="WD 4">
    <location>
        <begin position="191"/>
        <end position="230"/>
    </location>
</feature>
<feature type="repeat" description="WD 5">
    <location>
        <begin position="233"/>
        <end position="272"/>
    </location>
</feature>
<feature type="repeat" description="WD 6">
    <location>
        <begin position="283"/>
        <end position="322"/>
    </location>
</feature>
<feature type="repeat" description="WD 7">
    <location>
        <begin position="325"/>
        <end position="357"/>
    </location>
</feature>
<feature type="modified residue" description="Asymmetric dimethylarginine" evidence="1">
    <location>
        <position position="21"/>
    </location>
</feature>
<feature type="cross-link" description="Glycyl lysine isopeptide (Lys-Gly) (interchain with G-Cter in SUMO2)" evidence="31">
    <location>
        <position position="18"/>
    </location>
</feature>
<feature type="cross-link" description="Glycyl lysine isopeptide (Lys-Gly) (interchain with G-Cter in SUMO2)" evidence="30 31">
    <location>
        <position position="270"/>
    </location>
</feature>
<feature type="splice variant" id="VSP_056395" description="In isoform 2." evidence="15">
    <original>ISASSDKRLYMGEIQ</original>
    <variation>ETGFHRIGQGGHELLTSSNPPASASQSAGITGVSHCAQLQTVFMWVSMSVSPLLISGESKSNAPFSS</variation>
    <location>
        <begin position="343"/>
        <end position="357"/>
    </location>
</feature>
<feature type="sequence conflict" description="In Ref. 1; AAC69625." evidence="16" ref="1">
    <original>E</original>
    <variation>D</variation>
    <location>
        <position position="3"/>
    </location>
</feature>
<feature type="sequence conflict" description="In Ref. 1; AAC69625." evidence="16" ref="1">
    <original>RG</original>
    <variation>KS</variation>
    <location>
        <begin position="162"/>
        <end position="163"/>
    </location>
</feature>
<feature type="sequence conflict" description="In Ref. 5; AAC64084." evidence="16" ref="5">
    <original>I</original>
    <variation>V</variation>
    <location>
        <position position="187"/>
    </location>
</feature>
<feature type="sequence conflict" description="In Ref. 5." evidence="16" ref="5">
    <original>I</original>
    <variation>L</variation>
    <location>
        <position position="343"/>
    </location>
</feature>
<feature type="strand" evidence="37">
    <location>
        <begin position="53"/>
        <end position="55"/>
    </location>
</feature>
<feature type="strand" evidence="33">
    <location>
        <begin position="56"/>
        <end position="62"/>
    </location>
</feature>
<feature type="strand" evidence="34">
    <location>
        <begin position="71"/>
        <end position="74"/>
    </location>
</feature>
<feature type="strand" evidence="34">
    <location>
        <begin position="76"/>
        <end position="84"/>
    </location>
</feature>
<feature type="strand" evidence="34">
    <location>
        <begin position="90"/>
        <end position="96"/>
    </location>
</feature>
<feature type="strand" evidence="34">
    <location>
        <begin position="101"/>
        <end position="104"/>
    </location>
</feature>
<feature type="strand" evidence="35">
    <location>
        <begin position="112"/>
        <end position="117"/>
    </location>
</feature>
<feature type="strand" evidence="33">
    <location>
        <begin position="119"/>
        <end position="121"/>
    </location>
</feature>
<feature type="strand" evidence="34">
    <location>
        <begin position="122"/>
        <end position="127"/>
    </location>
</feature>
<feature type="turn" evidence="32">
    <location>
        <begin position="129"/>
        <end position="131"/>
    </location>
</feature>
<feature type="strand" evidence="34">
    <location>
        <begin position="133"/>
        <end position="137"/>
    </location>
</feature>
<feature type="turn" evidence="34">
    <location>
        <begin position="138"/>
        <end position="140"/>
    </location>
</feature>
<feature type="strand" evidence="34">
    <location>
        <begin position="143"/>
        <end position="147"/>
    </location>
</feature>
<feature type="strand" evidence="34">
    <location>
        <begin position="154"/>
        <end position="159"/>
    </location>
</feature>
<feature type="strand" evidence="34">
    <location>
        <begin position="161"/>
        <end position="164"/>
    </location>
</feature>
<feature type="strand" evidence="34">
    <location>
        <begin position="167"/>
        <end position="171"/>
    </location>
</feature>
<feature type="strand" evidence="34">
    <location>
        <begin position="174"/>
        <end position="179"/>
    </location>
</feature>
<feature type="turn" evidence="34">
    <location>
        <begin position="181"/>
        <end position="183"/>
    </location>
</feature>
<feature type="strand" evidence="34">
    <location>
        <begin position="184"/>
        <end position="191"/>
    </location>
</feature>
<feature type="strand" evidence="34">
    <location>
        <begin position="196"/>
        <end position="201"/>
    </location>
</feature>
<feature type="strand" evidence="37">
    <location>
        <begin position="203"/>
        <end position="205"/>
    </location>
</feature>
<feature type="strand" evidence="34">
    <location>
        <begin position="207"/>
        <end position="215"/>
    </location>
</feature>
<feature type="strand" evidence="34">
    <location>
        <begin position="217"/>
        <end position="221"/>
    </location>
</feature>
<feature type="turn" evidence="34">
    <location>
        <begin position="222"/>
        <end position="224"/>
    </location>
</feature>
<feature type="strand" evidence="34">
    <location>
        <begin position="226"/>
        <end position="231"/>
    </location>
</feature>
<feature type="strand" evidence="34">
    <location>
        <begin position="238"/>
        <end position="243"/>
    </location>
</feature>
<feature type="strand" evidence="34">
    <location>
        <begin position="247"/>
        <end position="254"/>
    </location>
</feature>
<feature type="turn" evidence="35">
    <location>
        <begin position="255"/>
        <end position="257"/>
    </location>
</feature>
<feature type="strand" evidence="34">
    <location>
        <begin position="259"/>
        <end position="263"/>
    </location>
</feature>
<feature type="strand" evidence="36">
    <location>
        <begin position="265"/>
        <end position="267"/>
    </location>
</feature>
<feature type="strand" evidence="34">
    <location>
        <begin position="275"/>
        <end position="277"/>
    </location>
</feature>
<feature type="strand" evidence="34">
    <location>
        <begin position="291"/>
        <end position="293"/>
    </location>
</feature>
<feature type="strand" evidence="34">
    <location>
        <begin position="297"/>
        <end position="302"/>
    </location>
</feature>
<feature type="strand" evidence="35">
    <location>
        <begin position="305"/>
        <end position="307"/>
    </location>
</feature>
<feature type="strand" evidence="34">
    <location>
        <begin position="309"/>
        <end position="313"/>
    </location>
</feature>
<feature type="turn" evidence="34">
    <location>
        <begin position="314"/>
        <end position="316"/>
    </location>
</feature>
<feature type="strand" evidence="34">
    <location>
        <begin position="319"/>
        <end position="323"/>
    </location>
</feature>
<feature type="strand" evidence="34">
    <location>
        <begin position="330"/>
        <end position="335"/>
    </location>
</feature>
<feature type="strand" evidence="34">
    <location>
        <begin position="337"/>
        <end position="346"/>
    </location>
</feature>
<feature type="strand" evidence="34">
    <location>
        <begin position="349"/>
        <end position="355"/>
    </location>
</feature>
<keyword id="KW-0002">3D-structure</keyword>
<keyword id="KW-0025">Alternative splicing</keyword>
<keyword id="KW-1017">Isopeptide bond</keyword>
<keyword id="KW-0488">Methylation</keyword>
<keyword id="KW-0507">mRNA processing</keyword>
<keyword id="KW-0508">mRNA splicing</keyword>
<keyword id="KW-0539">Nucleus</keyword>
<keyword id="KW-1267">Proteomics identification</keyword>
<keyword id="KW-1185">Reference proteome</keyword>
<keyword id="KW-0677">Repeat</keyword>
<keyword id="KW-0747">Spliceosome</keyword>
<keyword id="KW-0832">Ubl conjugation</keyword>
<keyword id="KW-0853">WD repeat</keyword>
<accession>Q96DI7</accession>
<accession>B4DQJ1</accession>
<accession>O75938</accession>
<accession>O95320</accession>
<evidence type="ECO:0000250" key="1">
    <source>
        <dbReference type="UniProtKB" id="Q6PE01"/>
    </source>
</evidence>
<evidence type="ECO:0000269" key="2">
    <source>
    </source>
</evidence>
<evidence type="ECO:0000269" key="3">
    <source>
    </source>
</evidence>
<evidence type="ECO:0000269" key="4">
    <source>
    </source>
</evidence>
<evidence type="ECO:0000269" key="5">
    <source>
    </source>
</evidence>
<evidence type="ECO:0000269" key="6">
    <source>
    </source>
</evidence>
<evidence type="ECO:0000269" key="7">
    <source>
    </source>
</evidence>
<evidence type="ECO:0000269" key="8">
    <source>
    </source>
</evidence>
<evidence type="ECO:0000269" key="9">
    <source>
    </source>
</evidence>
<evidence type="ECO:0000269" key="10">
    <source>
    </source>
</evidence>
<evidence type="ECO:0000269" key="11">
    <source>
    </source>
</evidence>
<evidence type="ECO:0000269" key="12">
    <source>
    </source>
</evidence>
<evidence type="ECO:0000269" key="13">
    <source>
    </source>
</evidence>
<evidence type="ECO:0000269" key="14">
    <source>
    </source>
</evidence>
<evidence type="ECO:0000303" key="15">
    <source>
    </source>
</evidence>
<evidence type="ECO:0000305" key="16"/>
<evidence type="ECO:0000305" key="17">
    <source>
    </source>
</evidence>
<evidence type="ECO:0007744" key="18">
    <source>
        <dbReference type="PDB" id="3JCR"/>
    </source>
</evidence>
<evidence type="ECO:0007744" key="19">
    <source>
        <dbReference type="PDB" id="5MQF"/>
    </source>
</evidence>
<evidence type="ECO:0007744" key="20">
    <source>
        <dbReference type="PDB" id="5O9Z"/>
    </source>
</evidence>
<evidence type="ECO:0007744" key="21">
    <source>
        <dbReference type="PDB" id="5XJC"/>
    </source>
</evidence>
<evidence type="ECO:0007744" key="22">
    <source>
        <dbReference type="PDB" id="5YZG"/>
    </source>
</evidence>
<evidence type="ECO:0007744" key="23">
    <source>
        <dbReference type="PDB" id="5Z56"/>
    </source>
</evidence>
<evidence type="ECO:0007744" key="24">
    <source>
        <dbReference type="PDB" id="5Z57"/>
    </source>
</evidence>
<evidence type="ECO:0007744" key="25">
    <source>
        <dbReference type="PDB" id="5Z58"/>
    </source>
</evidence>
<evidence type="ECO:0007744" key="26">
    <source>
        <dbReference type="PDB" id="6AH0"/>
    </source>
</evidence>
<evidence type="ECO:0007744" key="27">
    <source>
        <dbReference type="PDB" id="6AHD"/>
    </source>
</evidence>
<evidence type="ECO:0007744" key="28">
    <source>
        <dbReference type="PDB" id="6QDV"/>
    </source>
</evidence>
<evidence type="ECO:0007744" key="29">
    <source>
        <dbReference type="PDB" id="7DVQ"/>
    </source>
</evidence>
<evidence type="ECO:0007744" key="30">
    <source>
    </source>
</evidence>
<evidence type="ECO:0007744" key="31">
    <source>
    </source>
</evidence>
<evidence type="ECO:0007829" key="32">
    <source>
        <dbReference type="PDB" id="6ICZ"/>
    </source>
</evidence>
<evidence type="ECO:0007829" key="33">
    <source>
        <dbReference type="PDB" id="6ID0"/>
    </source>
</evidence>
<evidence type="ECO:0007829" key="34">
    <source>
        <dbReference type="PDB" id="6ID1"/>
    </source>
</evidence>
<evidence type="ECO:0007829" key="35">
    <source>
        <dbReference type="PDB" id="7DVQ"/>
    </source>
</evidence>
<evidence type="ECO:0007829" key="36">
    <source>
        <dbReference type="PDB" id="8Q7Q"/>
    </source>
</evidence>
<evidence type="ECO:0007829" key="37">
    <source>
        <dbReference type="PDB" id="8RC0"/>
    </source>
</evidence>
<proteinExistence type="evidence at protein level"/>
<comment type="function">
    <text evidence="2 3 4 5 6 7 8 9 10 11 14 17">Required for pre-mRNA splicing as component of the activated spliceosome (PubMed:11991638, PubMed:28076346, PubMed:28502770, PubMed:28781166, PubMed:29301961, PubMed:29360106, PubMed:30315277, PubMed:30705154). Component of the U5 small nuclear ribonucleoprotein (snRNP) complex and the U4/U6-U5 tri-snRNP complex, building blocks of the spliceosome (PubMed:16723661, PubMed:26912367, PubMed:9774689). As a component of the minor spliceosome, involved in the splicing of U12-type introns in pre-mRNAs (Probable).</text>
</comment>
<comment type="subunit">
    <text evidence="2 3 5 6 7 8 9 10 11 12 13 14">Component of the pre-catalytic and catalytic spliceosome complexes (PubMed:11991638, PubMed:28076346, PubMed:28502770, PubMed:28781166, PubMed:29301961, PubMed:29360106, PubMed:30315277, PubMed:9731529). Component of the postcatalytic spliceosome P complex (PubMed:30705154). Part of the U5 snRNP complex. Interacts with PRPF8. Component of the U4/U6-U5 tri-snRNP complex composed of the U4, U6 and U5 snRNAs and at least PRPF3, PRPF4, PRPF6, PRPF8, PRPF31, SNRNP200, TXNL4A, WDR57, SNRNP40, DDX23, CD2BP2, PPIH, SNU13, EFTUD2, SART1 and USP39 (PubMed:16723661). Component of the minor spliceosome, which splices U12-type introns (PubMed:33509932).</text>
</comment>
<comment type="interaction">
    <interactant intactId="EBI-538492">
        <id>Q96DI7</id>
    </interactant>
    <interactant intactId="EBI-930964">
        <id>P54253</id>
        <label>ATXN1</label>
    </interactant>
    <organismsDiffer>false</organismsDiffer>
    <experiments>3</experiments>
</comment>
<comment type="interaction">
    <interactant intactId="EBI-538492">
        <id>Q96DI7</id>
    </interactant>
    <interactant intactId="EBI-540096">
        <id>Q9BUQ8</id>
        <label>DDX23</label>
    </interactant>
    <organismsDiffer>false</organismsDiffer>
    <experiments>5</experiments>
</comment>
<comment type="interaction">
    <interactant intactId="EBI-538492">
        <id>Q96DI7</id>
    </interactant>
    <interactant intactId="EBI-357897">
        <id>Q15029</id>
        <label>EFTUD2</label>
    </interactant>
    <organismsDiffer>false</organismsDiffer>
    <experiments>6</experiments>
</comment>
<comment type="interaction">
    <interactant intactId="EBI-538492">
        <id>Q96DI7</id>
    </interactant>
    <interactant intactId="EBI-744302">
        <id>P14136</id>
        <label>GFAP</label>
    </interactant>
    <organismsDiffer>false</organismsDiffer>
    <experiments>3</experiments>
</comment>
<comment type="interaction">
    <interactant intactId="EBI-538492">
        <id>Q96DI7</id>
    </interactant>
    <interactant intactId="EBI-747754">
        <id>P28799</id>
        <label>GRN</label>
    </interactant>
    <organismsDiffer>false</organismsDiffer>
    <experiments>3</experiments>
</comment>
<comment type="interaction">
    <interactant intactId="EBI-538492">
        <id>Q96DI7</id>
    </interactant>
    <interactant intactId="EBI-50433196">
        <id>A0A6Q8PF08</id>
        <label>PMP22</label>
    </interactant>
    <organismsDiffer>false</organismsDiffer>
    <experiments>3</experiments>
</comment>
<comment type="interaction">
    <interactant intactId="EBI-538492">
        <id>Q96DI7</id>
    </interactant>
    <interactant intactId="EBI-21251460">
        <id>O60260-5</id>
        <label>PRKN</label>
    </interactant>
    <organismsDiffer>false</organismsDiffer>
    <experiments>3</experiments>
</comment>
<comment type="interaction">
    <interactant intactId="EBI-538492">
        <id>Q96DI7</id>
    </interactant>
    <interactant intactId="EBI-538479">
        <id>Q6P2Q9</id>
        <label>PRPF8</label>
    </interactant>
    <organismsDiffer>false</organismsDiffer>
    <experiments>8</experiments>
</comment>
<comment type="interaction">
    <interactant intactId="EBI-538492">
        <id>Q96DI7</id>
    </interactant>
    <interactant intactId="EBI-1045395">
        <id>O75643</id>
        <label>SNRNP200</label>
    </interactant>
    <organismsDiffer>false</organismsDiffer>
    <experiments>5</experiments>
</comment>
<comment type="subcellular location">
    <subcellularLocation>
        <location evidence="4 5 6 7 8 9 10 11 13">Nucleus</location>
    </subcellularLocation>
</comment>
<comment type="alternative products">
    <event type="alternative splicing"/>
    <isoform>
        <id>Q96DI7-1</id>
        <name>1</name>
        <sequence type="displayed"/>
    </isoform>
    <isoform>
        <id>Q96DI7-2</id>
        <name>2</name>
        <sequence type="described" ref="VSP_056395"/>
    </isoform>
</comment>
<comment type="sequence caution" evidence="16">
    <conflict type="frameshift">
        <sequence resource="EMBL-CDS" id="AAC64084"/>
    </conflict>
    <text>An insertion/deletion of a short nucleotide stretch in its cDNA resulting in a frameshift.</text>
</comment>
<organism>
    <name type="scientific">Homo sapiens</name>
    <name type="common">Human</name>
    <dbReference type="NCBI Taxonomy" id="9606"/>
    <lineage>
        <taxon>Eukaryota</taxon>
        <taxon>Metazoa</taxon>
        <taxon>Chordata</taxon>
        <taxon>Craniata</taxon>
        <taxon>Vertebrata</taxon>
        <taxon>Euteleostomi</taxon>
        <taxon>Mammalia</taxon>
        <taxon>Eutheria</taxon>
        <taxon>Euarchontoglires</taxon>
        <taxon>Primates</taxon>
        <taxon>Haplorrhini</taxon>
        <taxon>Catarrhini</taxon>
        <taxon>Hominidae</taxon>
        <taxon>Homo</taxon>
    </lineage>
</organism>
<reference key="1">
    <citation type="journal article" date="1998" name="Mol. Cell. Biol.">
        <title>The human U5-220kD protein (hPrp8) forms a stable RNA-free complex with several U5-specific proteins, including an RNA unwindase, a homologue of ribosomal elongation factor EF-2, and a novel WD-40 protein.</title>
        <authorList>
            <person name="Achsel T."/>
            <person name="Ahrens K."/>
            <person name="Brahms H."/>
            <person name="Teigelkamp S."/>
            <person name="Luehrmann R."/>
        </authorList>
    </citation>
    <scope>NUCLEOTIDE SEQUENCE [MRNA] (ISOFORM 1)</scope>
    <scope>FUNCTION</scope>
    <scope>IDENTIFICATION IN U5 SNRP COMPLEX</scope>
    <scope>INTERACTION WITH PRPF8</scope>
</reference>
<reference key="2">
    <citation type="journal article" date="2004" name="Nat. Genet.">
        <title>Complete sequencing and characterization of 21,243 full-length human cDNAs.</title>
        <authorList>
            <person name="Ota T."/>
            <person name="Suzuki Y."/>
            <person name="Nishikawa T."/>
            <person name="Otsuki T."/>
            <person name="Sugiyama T."/>
            <person name="Irie R."/>
            <person name="Wakamatsu A."/>
            <person name="Hayashi K."/>
            <person name="Sato H."/>
            <person name="Nagai K."/>
            <person name="Kimura K."/>
            <person name="Makita H."/>
            <person name="Sekine M."/>
            <person name="Obayashi M."/>
            <person name="Nishi T."/>
            <person name="Shibahara T."/>
            <person name="Tanaka T."/>
            <person name="Ishii S."/>
            <person name="Yamamoto J."/>
            <person name="Saito K."/>
            <person name="Kawai Y."/>
            <person name="Isono Y."/>
            <person name="Nakamura Y."/>
            <person name="Nagahari K."/>
            <person name="Murakami K."/>
            <person name="Yasuda T."/>
            <person name="Iwayanagi T."/>
            <person name="Wagatsuma M."/>
            <person name="Shiratori A."/>
            <person name="Sudo H."/>
            <person name="Hosoiri T."/>
            <person name="Kaku Y."/>
            <person name="Kodaira H."/>
            <person name="Kondo H."/>
            <person name="Sugawara M."/>
            <person name="Takahashi M."/>
            <person name="Kanda K."/>
            <person name="Yokoi T."/>
            <person name="Furuya T."/>
            <person name="Kikkawa E."/>
            <person name="Omura Y."/>
            <person name="Abe K."/>
            <person name="Kamihara K."/>
            <person name="Katsuta N."/>
            <person name="Sato K."/>
            <person name="Tanikawa M."/>
            <person name="Yamazaki M."/>
            <person name="Ninomiya K."/>
            <person name="Ishibashi T."/>
            <person name="Yamashita H."/>
            <person name="Murakawa K."/>
            <person name="Fujimori K."/>
            <person name="Tanai H."/>
            <person name="Kimata M."/>
            <person name="Watanabe M."/>
            <person name="Hiraoka S."/>
            <person name="Chiba Y."/>
            <person name="Ishida S."/>
            <person name="Ono Y."/>
            <person name="Takiguchi S."/>
            <person name="Watanabe S."/>
            <person name="Yosida M."/>
            <person name="Hotuta T."/>
            <person name="Kusano J."/>
            <person name="Kanehori K."/>
            <person name="Takahashi-Fujii A."/>
            <person name="Hara H."/>
            <person name="Tanase T.-O."/>
            <person name="Nomura Y."/>
            <person name="Togiya S."/>
            <person name="Komai F."/>
            <person name="Hara R."/>
            <person name="Takeuchi K."/>
            <person name="Arita M."/>
            <person name="Imose N."/>
            <person name="Musashino K."/>
            <person name="Yuuki H."/>
            <person name="Oshima A."/>
            <person name="Sasaki N."/>
            <person name="Aotsuka S."/>
            <person name="Yoshikawa Y."/>
            <person name="Matsunawa H."/>
            <person name="Ichihara T."/>
            <person name="Shiohata N."/>
            <person name="Sano S."/>
            <person name="Moriya S."/>
            <person name="Momiyama H."/>
            <person name="Satoh N."/>
            <person name="Takami S."/>
            <person name="Terashima Y."/>
            <person name="Suzuki O."/>
            <person name="Nakagawa S."/>
            <person name="Senoh A."/>
            <person name="Mizoguchi H."/>
            <person name="Goto Y."/>
            <person name="Shimizu F."/>
            <person name="Wakebe H."/>
            <person name="Hishigaki H."/>
            <person name="Watanabe T."/>
            <person name="Sugiyama A."/>
            <person name="Takemoto M."/>
            <person name="Kawakami B."/>
            <person name="Yamazaki M."/>
            <person name="Watanabe K."/>
            <person name="Kumagai A."/>
            <person name="Itakura S."/>
            <person name="Fukuzumi Y."/>
            <person name="Fujimori Y."/>
            <person name="Komiyama M."/>
            <person name="Tashiro H."/>
            <person name="Tanigami A."/>
            <person name="Fujiwara T."/>
            <person name="Ono T."/>
            <person name="Yamada K."/>
            <person name="Fujii Y."/>
            <person name="Ozaki K."/>
            <person name="Hirao M."/>
            <person name="Ohmori Y."/>
            <person name="Kawabata A."/>
            <person name="Hikiji T."/>
            <person name="Kobatake N."/>
            <person name="Inagaki H."/>
            <person name="Ikema Y."/>
            <person name="Okamoto S."/>
            <person name="Okitani R."/>
            <person name="Kawakami T."/>
            <person name="Noguchi S."/>
            <person name="Itoh T."/>
            <person name="Shigeta K."/>
            <person name="Senba T."/>
            <person name="Matsumura K."/>
            <person name="Nakajima Y."/>
            <person name="Mizuno T."/>
            <person name="Morinaga M."/>
            <person name="Sasaki M."/>
            <person name="Togashi T."/>
            <person name="Oyama M."/>
            <person name="Hata H."/>
            <person name="Watanabe M."/>
            <person name="Komatsu T."/>
            <person name="Mizushima-Sugano J."/>
            <person name="Satoh T."/>
            <person name="Shirai Y."/>
            <person name="Takahashi Y."/>
            <person name="Nakagawa K."/>
            <person name="Okumura K."/>
            <person name="Nagase T."/>
            <person name="Nomura N."/>
            <person name="Kikuchi H."/>
            <person name="Masuho Y."/>
            <person name="Yamashita R."/>
            <person name="Nakai K."/>
            <person name="Yada T."/>
            <person name="Nakamura Y."/>
            <person name="Ohara O."/>
            <person name="Isogai T."/>
            <person name="Sugano S."/>
        </authorList>
    </citation>
    <scope>NUCLEOTIDE SEQUENCE [LARGE SCALE MRNA] (ISOFORM 2)</scope>
</reference>
<reference key="3">
    <citation type="journal article" date="2006" name="Nature">
        <title>The DNA sequence and biological annotation of human chromosome 1.</title>
        <authorList>
            <person name="Gregory S.G."/>
            <person name="Barlow K.F."/>
            <person name="McLay K.E."/>
            <person name="Kaul R."/>
            <person name="Swarbreck D."/>
            <person name="Dunham A."/>
            <person name="Scott C.E."/>
            <person name="Howe K.L."/>
            <person name="Woodfine K."/>
            <person name="Spencer C.C.A."/>
            <person name="Jones M.C."/>
            <person name="Gillson C."/>
            <person name="Searle S."/>
            <person name="Zhou Y."/>
            <person name="Kokocinski F."/>
            <person name="McDonald L."/>
            <person name="Evans R."/>
            <person name="Phillips K."/>
            <person name="Atkinson A."/>
            <person name="Cooper R."/>
            <person name="Jones C."/>
            <person name="Hall R.E."/>
            <person name="Andrews T.D."/>
            <person name="Lloyd C."/>
            <person name="Ainscough R."/>
            <person name="Almeida J.P."/>
            <person name="Ambrose K.D."/>
            <person name="Anderson F."/>
            <person name="Andrew R.W."/>
            <person name="Ashwell R.I.S."/>
            <person name="Aubin K."/>
            <person name="Babbage A.K."/>
            <person name="Bagguley C.L."/>
            <person name="Bailey J."/>
            <person name="Beasley H."/>
            <person name="Bethel G."/>
            <person name="Bird C.P."/>
            <person name="Bray-Allen S."/>
            <person name="Brown J.Y."/>
            <person name="Brown A.J."/>
            <person name="Buckley D."/>
            <person name="Burton J."/>
            <person name="Bye J."/>
            <person name="Carder C."/>
            <person name="Chapman J.C."/>
            <person name="Clark S.Y."/>
            <person name="Clarke G."/>
            <person name="Clee C."/>
            <person name="Cobley V."/>
            <person name="Collier R.E."/>
            <person name="Corby N."/>
            <person name="Coville G.J."/>
            <person name="Davies J."/>
            <person name="Deadman R."/>
            <person name="Dunn M."/>
            <person name="Earthrowl M."/>
            <person name="Ellington A.G."/>
            <person name="Errington H."/>
            <person name="Frankish A."/>
            <person name="Frankland J."/>
            <person name="French L."/>
            <person name="Garner P."/>
            <person name="Garnett J."/>
            <person name="Gay L."/>
            <person name="Ghori M.R.J."/>
            <person name="Gibson R."/>
            <person name="Gilby L.M."/>
            <person name="Gillett W."/>
            <person name="Glithero R.J."/>
            <person name="Grafham D.V."/>
            <person name="Griffiths C."/>
            <person name="Griffiths-Jones S."/>
            <person name="Grocock R."/>
            <person name="Hammond S."/>
            <person name="Harrison E.S.I."/>
            <person name="Hart E."/>
            <person name="Haugen E."/>
            <person name="Heath P.D."/>
            <person name="Holmes S."/>
            <person name="Holt K."/>
            <person name="Howden P.J."/>
            <person name="Hunt A.R."/>
            <person name="Hunt S.E."/>
            <person name="Hunter G."/>
            <person name="Isherwood J."/>
            <person name="James R."/>
            <person name="Johnson C."/>
            <person name="Johnson D."/>
            <person name="Joy A."/>
            <person name="Kay M."/>
            <person name="Kershaw J.K."/>
            <person name="Kibukawa M."/>
            <person name="Kimberley A.M."/>
            <person name="King A."/>
            <person name="Knights A.J."/>
            <person name="Lad H."/>
            <person name="Laird G."/>
            <person name="Lawlor S."/>
            <person name="Leongamornlert D.A."/>
            <person name="Lloyd D.M."/>
            <person name="Loveland J."/>
            <person name="Lovell J."/>
            <person name="Lush M.J."/>
            <person name="Lyne R."/>
            <person name="Martin S."/>
            <person name="Mashreghi-Mohammadi M."/>
            <person name="Matthews L."/>
            <person name="Matthews N.S.W."/>
            <person name="McLaren S."/>
            <person name="Milne S."/>
            <person name="Mistry S."/>
            <person name="Moore M.J.F."/>
            <person name="Nickerson T."/>
            <person name="O'Dell C.N."/>
            <person name="Oliver K."/>
            <person name="Palmeiri A."/>
            <person name="Palmer S.A."/>
            <person name="Parker A."/>
            <person name="Patel D."/>
            <person name="Pearce A.V."/>
            <person name="Peck A.I."/>
            <person name="Pelan S."/>
            <person name="Phelps K."/>
            <person name="Phillimore B.J."/>
            <person name="Plumb R."/>
            <person name="Rajan J."/>
            <person name="Raymond C."/>
            <person name="Rouse G."/>
            <person name="Saenphimmachak C."/>
            <person name="Sehra H.K."/>
            <person name="Sheridan E."/>
            <person name="Shownkeen R."/>
            <person name="Sims S."/>
            <person name="Skuce C.D."/>
            <person name="Smith M."/>
            <person name="Steward C."/>
            <person name="Subramanian S."/>
            <person name="Sycamore N."/>
            <person name="Tracey A."/>
            <person name="Tromans A."/>
            <person name="Van Helmond Z."/>
            <person name="Wall M."/>
            <person name="Wallis J.M."/>
            <person name="White S."/>
            <person name="Whitehead S.L."/>
            <person name="Wilkinson J.E."/>
            <person name="Willey D.L."/>
            <person name="Williams H."/>
            <person name="Wilming L."/>
            <person name="Wray P.W."/>
            <person name="Wu Z."/>
            <person name="Coulson A."/>
            <person name="Vaudin M."/>
            <person name="Sulston J.E."/>
            <person name="Durbin R.M."/>
            <person name="Hubbard T."/>
            <person name="Wooster R."/>
            <person name="Dunham I."/>
            <person name="Carter N.P."/>
            <person name="McVean G."/>
            <person name="Ross M.T."/>
            <person name="Harrow J."/>
            <person name="Olson M.V."/>
            <person name="Beck S."/>
            <person name="Rogers J."/>
            <person name="Bentley D.R."/>
        </authorList>
    </citation>
    <scope>NUCLEOTIDE SEQUENCE [LARGE SCALE GENOMIC DNA]</scope>
</reference>
<reference key="4">
    <citation type="journal article" date="2004" name="Genome Res.">
        <title>The status, quality, and expansion of the NIH full-length cDNA project: the Mammalian Gene Collection (MGC).</title>
        <authorList>
            <consortium name="The MGC Project Team"/>
        </authorList>
    </citation>
    <scope>NUCLEOTIDE SEQUENCE [LARGE SCALE MRNA] (ISOFORM 1)</scope>
    <source>
        <tissue>Placenta</tissue>
    </source>
</reference>
<reference key="5">
    <citation type="journal article" date="1998" name="Nat. Genet.">
        <title>Mass spectrometry and EST-database searching allows characterization of the multi-protein spliceosome complex.</title>
        <authorList>
            <person name="Neubauer G."/>
            <person name="King A."/>
            <person name="Rappsilber J."/>
            <person name="Calvio C."/>
            <person name="Watson M."/>
            <person name="Ajuh P."/>
            <person name="Sleeman J."/>
            <person name="Lamond A.I."/>
            <person name="Mann M."/>
        </authorList>
    </citation>
    <scope>NUCLEOTIDE SEQUENCE [MRNA] OF 60-357 (ISOFORM 1)</scope>
    <scope>IDENTIFICATION BY MASS SPECTROMETRY</scope>
    <scope>SUBCELLULAR LOCATION</scope>
    <scope>IDENTIFICATION IN SPLICEOSOMAL COMPLEX</scope>
</reference>
<reference key="6">
    <citation type="journal article" date="2002" name="RNA">
        <title>Purification and characterization of native spliceosomes suitable for three-dimensional structural analysis.</title>
        <authorList>
            <person name="Jurica M.S."/>
            <person name="Licklider L.J."/>
            <person name="Gygi S.P."/>
            <person name="Grigorieff N."/>
            <person name="Moore M.J."/>
        </authorList>
    </citation>
    <scope>IDENTIFICATION BY MASS SPECTROMETRY</scope>
    <scope>IDENTIFICATION IN THE SPLICEOSOME C COMPLEX</scope>
</reference>
<reference key="7">
    <citation type="journal article" date="2006" name="RNA">
        <title>The network of protein-protein interactions within the human U4/U6.U5 tri-snRNP.</title>
        <authorList>
            <person name="Liu S."/>
            <person name="Rauhut R."/>
            <person name="Vornlocher H.-P."/>
            <person name="Luehrmann R."/>
        </authorList>
    </citation>
    <scope>SUBUNIT</scope>
</reference>
<reference key="8">
    <citation type="journal article" date="2011" name="BMC Syst. Biol.">
        <title>Initial characterization of the human central proteome.</title>
        <authorList>
            <person name="Burkard T.R."/>
            <person name="Planyavsky M."/>
            <person name="Kaupe I."/>
            <person name="Breitwieser F.P."/>
            <person name="Buerckstuemmer T."/>
            <person name="Bennett K.L."/>
            <person name="Superti-Furga G."/>
            <person name="Colinge J."/>
        </authorList>
    </citation>
    <scope>IDENTIFICATION BY MASS SPECTROMETRY [LARGE SCALE ANALYSIS]</scope>
</reference>
<reference key="9">
    <citation type="journal article" date="2012" name="Proc. Natl. Acad. Sci. U.S.A.">
        <title>N-terminal acetylome analyses and functional insights of the N-terminal acetyltransferase NatB.</title>
        <authorList>
            <person name="Van Damme P."/>
            <person name="Lasa M."/>
            <person name="Polevoda B."/>
            <person name="Gazquez C."/>
            <person name="Elosegui-Artola A."/>
            <person name="Kim D.S."/>
            <person name="De Juan-Pardo E."/>
            <person name="Demeyer K."/>
            <person name="Hole K."/>
            <person name="Larrea E."/>
            <person name="Timmerman E."/>
            <person name="Prieto J."/>
            <person name="Arnesen T."/>
            <person name="Sherman F."/>
            <person name="Gevaert K."/>
            <person name="Aldabe R."/>
        </authorList>
    </citation>
    <scope>IDENTIFICATION BY MASS SPECTROMETRY [LARGE SCALE ANALYSIS]</scope>
</reference>
<reference key="10">
    <citation type="journal article" date="2015" name="Mol. Cell. Proteomics">
        <title>System-wide analysis of SUMOylation dynamics in response to replication stress reveals novel small ubiquitin-like modified target proteins and acceptor lysines relevant for genome stability.</title>
        <authorList>
            <person name="Xiao Z."/>
            <person name="Chang J.G."/>
            <person name="Hendriks I.A."/>
            <person name="Sigurdsson J.O."/>
            <person name="Olsen J.V."/>
            <person name="Vertegaal A.C."/>
        </authorList>
    </citation>
    <scope>SUMOYLATION [LARGE SCALE ANALYSIS] AT LYS-270</scope>
    <scope>IDENTIFICATION BY MASS SPECTROMETRY [LARGE SCALE ANALYSIS]</scope>
</reference>
<reference key="11">
    <citation type="journal article" date="2017" name="Nat. Struct. Mol. Biol.">
        <title>Site-specific mapping of the human SUMO proteome reveals co-modification with phosphorylation.</title>
        <authorList>
            <person name="Hendriks I.A."/>
            <person name="Lyon D."/>
            <person name="Young C."/>
            <person name="Jensen L.J."/>
            <person name="Vertegaal A.C."/>
            <person name="Nielsen M.L."/>
        </authorList>
    </citation>
    <scope>SUMOYLATION [LARGE SCALE ANALYSIS] AT LYS-18 AND LYS-270</scope>
    <scope>IDENTIFICATION BY MASS SPECTROMETRY [LARGE SCALE ANALYSIS]</scope>
</reference>
<reference evidence="18" key="12">
    <citation type="journal article" date="2016" name="Science">
        <title>Molecular architecture of the human U4/U6.U5 tri-snRNP.</title>
        <authorList>
            <person name="Agafonov D.E."/>
            <person name="Kastner B."/>
            <person name="Dybkov O."/>
            <person name="Hofele R.V."/>
            <person name="Liu W.T."/>
            <person name="Urlaub H."/>
            <person name="Luhrmann R."/>
            <person name="Stark H."/>
        </authorList>
    </citation>
    <scope>STRUCTURE BY ELECTRON MICROSCOPY (7.00 ANGSTROMS)</scope>
    <scope>IDENTIFICATION BY MASS SPECTROMETRY</scope>
    <scope>SUBCELLULAR LOCATION</scope>
    <scope>SUBUNIT</scope>
</reference>
<reference evidence="21" key="13">
    <citation type="journal article" date="2017" name="Cell">
        <title>An Atomic Structure of the Human Spliceosome.</title>
        <authorList>
            <person name="Zhang X."/>
            <person name="Yan C."/>
            <person name="Hang J."/>
            <person name="Finci L.I."/>
            <person name="Lei J."/>
            <person name="Shi Y."/>
        </authorList>
    </citation>
    <scope>STRUCTURE BY ELECTRON MICROSCOPY (3.60 ANGSTROMS)</scope>
    <scope>FUNCTION</scope>
    <scope>SUBCELLULAR LOCATION</scope>
    <scope>SUBUNIT</scope>
</reference>
<reference evidence="20" key="14">
    <citation type="journal article" date="2017" name="Cell">
        <title>Cryo-EM Structure of a Pre-catalytic Human Spliceosome Primed for Activation.</title>
        <authorList>
            <person name="Bertram K."/>
            <person name="Agafonov D.E."/>
            <person name="Dybkov O."/>
            <person name="Haselbach D."/>
            <person name="Leelaram M.N."/>
            <person name="Will C.L."/>
            <person name="Urlaub H."/>
            <person name="Kastner B."/>
            <person name="Luhrmann R."/>
            <person name="Stark H."/>
        </authorList>
    </citation>
    <scope>STRUCTURE BY ELECTRON MICROSCOPY (4.50 ANGSTROMS)</scope>
    <scope>FUNCTION</scope>
    <scope>SUBCELLULAR LOCATION</scope>
    <scope>SUBUNIT</scope>
</reference>
<reference evidence="19" key="15">
    <citation type="journal article" date="2017" name="Nature">
        <title>Cryo-EM structure of a human spliceosome activated for step 2 of splicing.</title>
        <authorList>
            <person name="Bertram K."/>
            <person name="Agafonov D.E."/>
            <person name="Liu W.T."/>
            <person name="Dybkov O."/>
            <person name="Will C.L."/>
            <person name="Hartmuth K."/>
            <person name="Urlaub H."/>
            <person name="Kastner B."/>
            <person name="Stark H."/>
            <person name="Luhrmann R."/>
        </authorList>
    </citation>
    <scope>STRUCTURE BY ELECTRON MICROSCOPY (5.90 ANGSTROMS)</scope>
    <scope>FUNCTION</scope>
    <scope>SUBCELLULAR LOCATION</scope>
    <scope>SUBUNIT</scope>
</reference>
<reference evidence="26 27" key="16">
    <citation type="journal article" date="2018" name="Cell Res.">
        <title>Structures of the human pre-catalytic spliceosome and its precursor spliceosome.</title>
        <authorList>
            <person name="Zhan X."/>
            <person name="Yan C."/>
            <person name="Zhang X."/>
            <person name="Lei J."/>
            <person name="Shi Y."/>
        </authorList>
    </citation>
    <scope>STRUCTURE BY ELECTRON MICROSCOPY (3.80 ANGSTROMS)</scope>
    <scope>FUNCTION</scope>
    <scope>SUBCELLULAR LOCATION</scope>
    <scope>SUBUNIT</scope>
</reference>
<reference evidence="23 24 25" key="17">
    <citation type="journal article" date="2018" name="Cell Res.">
        <title>Structure of the human activated spliceosome in three conformational states.</title>
        <authorList>
            <person name="Zhang X."/>
            <person name="Yan C."/>
            <person name="Zhan X."/>
            <person name="Li L."/>
            <person name="Lei J."/>
            <person name="Shi Y."/>
        </authorList>
    </citation>
    <scope>STRUCTURE BY ELECTRON MICROSCOPY (4.90 ANGSTROMS)</scope>
    <scope>FUNCTION</scope>
    <scope>SUBCELLULAR LOCATION</scope>
    <scope>SUBUNIT</scope>
</reference>
<reference evidence="22" key="18">
    <citation type="journal article" date="2018" name="Science">
        <title>Structure of a human catalytic step I spliceosome.</title>
        <authorList>
            <person name="Zhan X."/>
            <person name="Yan C."/>
            <person name="Zhang X."/>
            <person name="Lei J."/>
            <person name="Shi Y."/>
        </authorList>
    </citation>
    <scope>STRUCTURE BY ELECTRON MICROSCOPY (4.10 ANGSTROMS)</scope>
    <scope>FUNCTION</scope>
    <scope>SUBCELLULAR LOCATION</scope>
    <scope>SUBUNIT</scope>
</reference>
<reference evidence="28" key="19">
    <citation type="journal article" date="2019" name="Science">
        <title>A human postcatalytic spliceosome structure reveals essential roles of metazoan factors for exon ligation.</title>
        <authorList>
            <person name="Fica S.M."/>
            <person name="Oubridge C."/>
            <person name="Wilkinson M.E."/>
            <person name="Newman A.J."/>
            <person name="Nagai K."/>
        </authorList>
    </citation>
    <scope>STRUCTURE BY ELECTRON MICROSCOPY (3.30 ANGSTROMS) OF 51-357</scope>
    <scope>FUNCTION</scope>
    <scope>SUBCELLULAR LOCATION</scope>
    <scope>SUBUNIT</scope>
</reference>
<reference evidence="29" key="20">
    <citation type="journal article" date="2021" name="Science">
        <title>Structure of the activated human minor spliceosome.</title>
        <authorList>
            <person name="Bai R."/>
            <person name="Wan R."/>
            <person name="Wang L."/>
            <person name="Xu K."/>
            <person name="Zhang Q."/>
            <person name="Lei J."/>
            <person name="Shi Y."/>
        </authorList>
    </citation>
    <scope>STRUCTURE BY ELECTRON MICROSCOPY (2.89 ANGSTROMS)</scope>
    <scope>FUNCTION</scope>
    <scope>SUBUNIT</scope>
</reference>